<name>GUAC_ECOBW</name>
<proteinExistence type="inferred from homology"/>
<sequence length="347" mass="37384">MRIEEDLKLGFKDVLIRPKRSTLKSRSDVELERQFTFKHSGQSWSGVPIIAANMDTVGTFSMASALASFDILTAVHKHYSVEEWQAFINNSSADVLKHVMVSTGTSDADFEKTKQILDLNPALNFVCIDVANGYSEHFVQFVAKAREAWPTKTICAGNVVTGEMCEELILSGADIVKVGIGPGSVCTTRVKTGVGYPQLSAVIECADAAHGLGGMIVSDGGCTTPGDVAKAFGGGADFVMLGGMLAGHEESGGRIVEENGEKFMLFYGMSSESAMKRHVGGVAEYRAAEGKTVKLPLRGPVENTARDILGGLRSACTYVGASRLKELTKRTTFIRVQEQENRIFNNL</sequence>
<comment type="function">
    <text evidence="1">Catalyzes the irreversible NADPH-dependent deamination of GMP to IMP. It functions in the conversion of nucleobase, nucleoside and nucleotide derivatives of G to A nucleotides, and in maintaining the intracellular balance of A and G nucleotides.</text>
</comment>
<comment type="catalytic activity">
    <reaction evidence="1">
        <text>IMP + NH4(+) + NADP(+) = GMP + NADPH + 2 H(+)</text>
        <dbReference type="Rhea" id="RHEA:17185"/>
        <dbReference type="ChEBI" id="CHEBI:15378"/>
        <dbReference type="ChEBI" id="CHEBI:28938"/>
        <dbReference type="ChEBI" id="CHEBI:57783"/>
        <dbReference type="ChEBI" id="CHEBI:58053"/>
        <dbReference type="ChEBI" id="CHEBI:58115"/>
        <dbReference type="ChEBI" id="CHEBI:58349"/>
        <dbReference type="EC" id="1.7.1.7"/>
    </reaction>
</comment>
<comment type="subunit">
    <text evidence="1">Homotetramer.</text>
</comment>
<comment type="similarity">
    <text evidence="1">Belongs to the IMPDH/GMPR family. GuaC type 1 subfamily.</text>
</comment>
<accession>C4ZRJ8</accession>
<evidence type="ECO:0000255" key="1">
    <source>
        <dbReference type="HAMAP-Rule" id="MF_00596"/>
    </source>
</evidence>
<feature type="chain" id="PRO_1000212180" description="GMP reductase">
    <location>
        <begin position="1"/>
        <end position="347"/>
    </location>
</feature>
<feature type="active site" description="Thioimidate intermediate" evidence="1">
    <location>
        <position position="186"/>
    </location>
</feature>
<feature type="binding site" evidence="1">
    <location>
        <begin position="108"/>
        <end position="131"/>
    </location>
    <ligand>
        <name>NADP(+)</name>
        <dbReference type="ChEBI" id="CHEBI:58349"/>
    </ligand>
</feature>
<feature type="binding site" evidence="1">
    <location>
        <position position="181"/>
    </location>
    <ligand>
        <name>K(+)</name>
        <dbReference type="ChEBI" id="CHEBI:29103"/>
    </ligand>
</feature>
<feature type="binding site" evidence="1">
    <location>
        <position position="183"/>
    </location>
    <ligand>
        <name>K(+)</name>
        <dbReference type="ChEBI" id="CHEBI:29103"/>
    </ligand>
</feature>
<feature type="binding site" evidence="1">
    <location>
        <begin position="216"/>
        <end position="239"/>
    </location>
    <ligand>
        <name>NADP(+)</name>
        <dbReference type="ChEBI" id="CHEBI:58349"/>
    </ligand>
</feature>
<reference key="1">
    <citation type="journal article" date="2009" name="J. Bacteriol.">
        <title>Genomic sequencing reveals regulatory mutations and recombinational events in the widely used MC4100 lineage of Escherichia coli K-12.</title>
        <authorList>
            <person name="Ferenci T."/>
            <person name="Zhou Z."/>
            <person name="Betteridge T."/>
            <person name="Ren Y."/>
            <person name="Liu Y."/>
            <person name="Feng L."/>
            <person name="Reeves P.R."/>
            <person name="Wang L."/>
        </authorList>
    </citation>
    <scope>NUCLEOTIDE SEQUENCE [LARGE SCALE GENOMIC DNA]</scope>
    <source>
        <strain>K12 / MC4100 / BW2952</strain>
    </source>
</reference>
<gene>
    <name evidence="1" type="primary">guaC</name>
    <name type="ordered locus">BWG_0098</name>
</gene>
<organism>
    <name type="scientific">Escherichia coli (strain K12 / MC4100 / BW2952)</name>
    <dbReference type="NCBI Taxonomy" id="595496"/>
    <lineage>
        <taxon>Bacteria</taxon>
        <taxon>Pseudomonadati</taxon>
        <taxon>Pseudomonadota</taxon>
        <taxon>Gammaproteobacteria</taxon>
        <taxon>Enterobacterales</taxon>
        <taxon>Enterobacteriaceae</taxon>
        <taxon>Escherichia</taxon>
    </lineage>
</organism>
<keyword id="KW-0479">Metal-binding</keyword>
<keyword id="KW-0521">NADP</keyword>
<keyword id="KW-0560">Oxidoreductase</keyword>
<keyword id="KW-0630">Potassium</keyword>
<dbReference type="EC" id="1.7.1.7" evidence="1"/>
<dbReference type="EMBL" id="CP001396">
    <property type="protein sequence ID" value="ACR63381.1"/>
    <property type="molecule type" value="Genomic_DNA"/>
</dbReference>
<dbReference type="RefSeq" id="WP_001217338.1">
    <property type="nucleotide sequence ID" value="NC_012759.1"/>
</dbReference>
<dbReference type="SMR" id="C4ZRJ8"/>
<dbReference type="GeneID" id="93777331"/>
<dbReference type="KEGG" id="ebw:BWG_0098"/>
<dbReference type="HOGENOM" id="CLU_022552_5_3_6"/>
<dbReference type="GO" id="GO:0005829">
    <property type="term" value="C:cytosol"/>
    <property type="evidence" value="ECO:0007669"/>
    <property type="project" value="TreeGrafter"/>
</dbReference>
<dbReference type="GO" id="GO:1902560">
    <property type="term" value="C:GMP reductase complex"/>
    <property type="evidence" value="ECO:0007669"/>
    <property type="project" value="InterPro"/>
</dbReference>
<dbReference type="GO" id="GO:0003920">
    <property type="term" value="F:GMP reductase activity"/>
    <property type="evidence" value="ECO:0007669"/>
    <property type="project" value="UniProtKB-UniRule"/>
</dbReference>
<dbReference type="GO" id="GO:0046872">
    <property type="term" value="F:metal ion binding"/>
    <property type="evidence" value="ECO:0007669"/>
    <property type="project" value="UniProtKB-KW"/>
</dbReference>
<dbReference type="GO" id="GO:0006163">
    <property type="term" value="P:purine nucleotide metabolic process"/>
    <property type="evidence" value="ECO:0007669"/>
    <property type="project" value="UniProtKB-UniRule"/>
</dbReference>
<dbReference type="CDD" id="cd00381">
    <property type="entry name" value="IMPDH"/>
    <property type="match status" value="1"/>
</dbReference>
<dbReference type="FunFam" id="3.20.20.70:FF:000012">
    <property type="entry name" value="GMP reductase"/>
    <property type="match status" value="1"/>
</dbReference>
<dbReference type="Gene3D" id="3.20.20.70">
    <property type="entry name" value="Aldolase class I"/>
    <property type="match status" value="1"/>
</dbReference>
<dbReference type="HAMAP" id="MF_00596">
    <property type="entry name" value="GMP_reduct_type1"/>
    <property type="match status" value="1"/>
</dbReference>
<dbReference type="InterPro" id="IPR013785">
    <property type="entry name" value="Aldolase_TIM"/>
</dbReference>
<dbReference type="InterPro" id="IPR050139">
    <property type="entry name" value="GMP_reductase"/>
</dbReference>
<dbReference type="InterPro" id="IPR005993">
    <property type="entry name" value="GMPR"/>
</dbReference>
<dbReference type="InterPro" id="IPR015875">
    <property type="entry name" value="IMP_DH/GMP_Rdtase_CS"/>
</dbReference>
<dbReference type="InterPro" id="IPR001093">
    <property type="entry name" value="IMP_DH_GMPRt"/>
</dbReference>
<dbReference type="NCBIfam" id="TIGR01305">
    <property type="entry name" value="GMP_reduct_1"/>
    <property type="match status" value="1"/>
</dbReference>
<dbReference type="NCBIfam" id="NF003470">
    <property type="entry name" value="PRK05096.1"/>
    <property type="match status" value="1"/>
</dbReference>
<dbReference type="PANTHER" id="PTHR43170">
    <property type="entry name" value="GMP REDUCTASE"/>
    <property type="match status" value="1"/>
</dbReference>
<dbReference type="PANTHER" id="PTHR43170:SF5">
    <property type="entry name" value="GMP REDUCTASE"/>
    <property type="match status" value="1"/>
</dbReference>
<dbReference type="Pfam" id="PF00478">
    <property type="entry name" value="IMPDH"/>
    <property type="match status" value="1"/>
</dbReference>
<dbReference type="PIRSF" id="PIRSF000235">
    <property type="entry name" value="GMP_reductase"/>
    <property type="match status" value="1"/>
</dbReference>
<dbReference type="SMART" id="SM01240">
    <property type="entry name" value="IMPDH"/>
    <property type="match status" value="1"/>
</dbReference>
<dbReference type="SUPFAM" id="SSF51412">
    <property type="entry name" value="Inosine monophosphate dehydrogenase (IMPDH)"/>
    <property type="match status" value="1"/>
</dbReference>
<dbReference type="PROSITE" id="PS00487">
    <property type="entry name" value="IMP_DH_GMP_RED"/>
    <property type="match status" value="1"/>
</dbReference>
<protein>
    <recommendedName>
        <fullName evidence="1">GMP reductase</fullName>
        <ecNumber evidence="1">1.7.1.7</ecNumber>
    </recommendedName>
    <alternativeName>
        <fullName evidence="1">Guanosine 5'-monophosphate oxidoreductase</fullName>
        <shortName evidence="1">Guanosine monophosphate reductase</shortName>
    </alternativeName>
</protein>